<reference key="1">
    <citation type="journal article" date="2006" name="Genes Genet. Syst.">
        <title>Complete nucleotide sequence of the cotton (Gossypium barbadense L.) chloroplast genome with a comparative analysis of sequences among 9 dicot plants.</title>
        <authorList>
            <person name="Ibrahim R.I.H."/>
            <person name="Azuma J."/>
            <person name="Sakamoto M."/>
        </authorList>
    </citation>
    <scope>NUCLEOTIDE SEQUENCE [LARGE SCALE GENOMIC DNA]</scope>
</reference>
<gene>
    <name evidence="2" type="primary">psbD</name>
</gene>
<accession>A0ZZ30</accession>
<keyword id="KW-0007">Acetylation</keyword>
<keyword id="KW-0148">Chlorophyll</keyword>
<keyword id="KW-0150">Chloroplast</keyword>
<keyword id="KW-0157">Chromophore</keyword>
<keyword id="KW-0249">Electron transport</keyword>
<keyword id="KW-0408">Iron</keyword>
<keyword id="KW-0460">Magnesium</keyword>
<keyword id="KW-0472">Membrane</keyword>
<keyword id="KW-0479">Metal-binding</keyword>
<keyword id="KW-0560">Oxidoreductase</keyword>
<keyword id="KW-0597">Phosphoprotein</keyword>
<keyword id="KW-0602">Photosynthesis</keyword>
<keyword id="KW-0604">Photosystem II</keyword>
<keyword id="KW-0934">Plastid</keyword>
<keyword id="KW-0793">Thylakoid</keyword>
<keyword id="KW-0812">Transmembrane</keyword>
<keyword id="KW-1133">Transmembrane helix</keyword>
<keyword id="KW-0813">Transport</keyword>
<comment type="function">
    <text evidence="2">Photosystem II (PSII) is a light-driven water:plastoquinone oxidoreductase that uses light energy to abstract electrons from H(2)O, generating O(2) and a proton gradient subsequently used for ATP formation. It consists of a core antenna complex that captures photons, and an electron transfer chain that converts photonic excitation into a charge separation. The D1/D2 (PsbA/PsbD) reaction center heterodimer binds P680, the primary electron donor of PSII as well as several subsequent electron acceptors. D2 is needed for assembly of a stable PSII complex.</text>
</comment>
<comment type="catalytic activity">
    <reaction evidence="2">
        <text>2 a plastoquinone + 4 hnu + 2 H2O = 2 a plastoquinol + O2</text>
        <dbReference type="Rhea" id="RHEA:36359"/>
        <dbReference type="Rhea" id="RHEA-COMP:9561"/>
        <dbReference type="Rhea" id="RHEA-COMP:9562"/>
        <dbReference type="ChEBI" id="CHEBI:15377"/>
        <dbReference type="ChEBI" id="CHEBI:15379"/>
        <dbReference type="ChEBI" id="CHEBI:17757"/>
        <dbReference type="ChEBI" id="CHEBI:30212"/>
        <dbReference type="ChEBI" id="CHEBI:62192"/>
        <dbReference type="EC" id="1.10.3.9"/>
    </reaction>
</comment>
<comment type="cofactor">
    <text evidence="2">The D1/D2 heterodimer binds P680, chlorophylls that are the primary electron donor of PSII, and subsequent electron acceptors. It shares a non-heme iron and each subunit binds pheophytin, quinone, additional chlorophylls, carotenoids and lipids. There is also a Cl(-1) ion associated with D1 and D2, which is required for oxygen evolution. The PSII complex binds additional chlorophylls, carotenoids and specific lipids.</text>
</comment>
<comment type="subunit">
    <text evidence="2">PSII is composed of 1 copy each of membrane proteins PsbA, PsbB, PsbC, PsbD, PsbE, PsbF, PsbH, PsbI, PsbJ, PsbK, PsbL, PsbM, PsbT, PsbX, PsbY, PsbZ, Psb30/Ycf12, at least 3 peripheral proteins of the oxygen-evolving complex and a large number of cofactors. It forms dimeric complexes.</text>
</comment>
<comment type="subcellular location">
    <subcellularLocation>
        <location evidence="2">Plastid</location>
        <location evidence="2">Chloroplast thylakoid membrane</location>
        <topology evidence="2">Multi-pass membrane protein</topology>
    </subcellularLocation>
</comment>
<comment type="miscellaneous">
    <text evidence="2">2 of the reaction center chlorophylls (ChlD1 and ChlD2) are entirely coordinated by water.</text>
</comment>
<comment type="similarity">
    <text evidence="2">Belongs to the reaction center PufL/M/PsbA/D family.</text>
</comment>
<name>PSBD_GOSBA</name>
<evidence type="ECO:0000250" key="1">
    <source>
        <dbReference type="UniProtKB" id="P56761"/>
    </source>
</evidence>
<evidence type="ECO:0000255" key="2">
    <source>
        <dbReference type="HAMAP-Rule" id="MF_01383"/>
    </source>
</evidence>
<organism>
    <name type="scientific">Gossypium barbadense</name>
    <name type="common">Sea Island cotton</name>
    <name type="synonym">Hibiscus barbadensis</name>
    <dbReference type="NCBI Taxonomy" id="3634"/>
    <lineage>
        <taxon>Eukaryota</taxon>
        <taxon>Viridiplantae</taxon>
        <taxon>Streptophyta</taxon>
        <taxon>Embryophyta</taxon>
        <taxon>Tracheophyta</taxon>
        <taxon>Spermatophyta</taxon>
        <taxon>Magnoliopsida</taxon>
        <taxon>eudicotyledons</taxon>
        <taxon>Gunneridae</taxon>
        <taxon>Pentapetalae</taxon>
        <taxon>rosids</taxon>
        <taxon>malvids</taxon>
        <taxon>Malvales</taxon>
        <taxon>Malvaceae</taxon>
        <taxon>Malvoideae</taxon>
        <taxon>Gossypium</taxon>
    </lineage>
</organism>
<geneLocation type="chloroplast"/>
<sequence length="353" mass="39549">MTIALGKFTKDENDLFDIMDDWLRRDRFVFVGWSGLLLFPCAYFALGGWFTGTTFVTSWYTHGLASSYLEGCNFLTAAVSTPANSLAHSLLLLWGPEAQGDFTRWCQLGGLWTFVALHGAFGLIGFMLRQFELARSVQLRPYNAIAFSGPIAVFVSVFLIYPLGQSGWFFAPSFGVAAIFRFILFFQGFHNWTLNPFHMMGVAGVLGAALLCAIHGATVENTLFEDGDGANTFRAFNPTQAEETYSMVTANRFWSQIFGVAFSNKRWLHFFMLFVPVTGLWMSALGVVGLALNLRAYDFVSQEIRAAEDPEFETFYTKNILLNEGIRAWMAAQDQPHENLIFPEEVLPRGNAL</sequence>
<proteinExistence type="inferred from homology"/>
<feature type="initiator methionine" description="Removed" evidence="1">
    <location>
        <position position="1"/>
    </location>
</feature>
<feature type="chain" id="PRO_0000359653" description="Photosystem II D2 protein">
    <location>
        <begin position="2"/>
        <end position="353"/>
    </location>
</feature>
<feature type="transmembrane region" description="Helical" evidence="2">
    <location>
        <begin position="41"/>
        <end position="61"/>
    </location>
</feature>
<feature type="transmembrane region" description="Helical" evidence="2">
    <location>
        <begin position="125"/>
        <end position="141"/>
    </location>
</feature>
<feature type="transmembrane region" description="Helical" evidence="2">
    <location>
        <begin position="153"/>
        <end position="166"/>
    </location>
</feature>
<feature type="transmembrane region" description="Helical" evidence="2">
    <location>
        <begin position="208"/>
        <end position="228"/>
    </location>
</feature>
<feature type="transmembrane region" description="Helical" evidence="2">
    <location>
        <begin position="279"/>
        <end position="295"/>
    </location>
</feature>
<feature type="binding site" description="axial binding residue" evidence="2">
    <location>
        <position position="118"/>
    </location>
    <ligand>
        <name>chlorophyll a</name>
        <dbReference type="ChEBI" id="CHEBI:58416"/>
        <label>ChlzD2</label>
    </ligand>
    <ligandPart>
        <name>Mg</name>
        <dbReference type="ChEBI" id="CHEBI:25107"/>
    </ligandPart>
</feature>
<feature type="binding site" evidence="2">
    <location>
        <position position="130"/>
    </location>
    <ligand>
        <name>pheophytin a</name>
        <dbReference type="ChEBI" id="CHEBI:136840"/>
        <label>D2</label>
    </ligand>
</feature>
<feature type="binding site" evidence="2">
    <location>
        <position position="143"/>
    </location>
    <ligand>
        <name>pheophytin a</name>
        <dbReference type="ChEBI" id="CHEBI:136840"/>
        <label>D2</label>
    </ligand>
</feature>
<feature type="binding site" description="axial binding residue" evidence="2">
    <location>
        <position position="198"/>
    </location>
    <ligand>
        <name>chlorophyll a</name>
        <dbReference type="ChEBI" id="CHEBI:58416"/>
        <label>PD2</label>
    </ligand>
    <ligandPart>
        <name>Mg</name>
        <dbReference type="ChEBI" id="CHEBI:25107"/>
    </ligandPart>
</feature>
<feature type="binding site" evidence="2">
    <location>
        <position position="215"/>
    </location>
    <ligand>
        <name>a plastoquinone</name>
        <dbReference type="ChEBI" id="CHEBI:17757"/>
        <label>Q(A)</label>
    </ligand>
</feature>
<feature type="binding site" evidence="2">
    <location>
        <position position="215"/>
    </location>
    <ligand>
        <name>Fe cation</name>
        <dbReference type="ChEBI" id="CHEBI:24875"/>
        <note>ligand shared with heterodimeric partner</note>
    </ligand>
</feature>
<feature type="binding site" evidence="2">
    <location>
        <position position="262"/>
    </location>
    <ligand>
        <name>a plastoquinone</name>
        <dbReference type="ChEBI" id="CHEBI:17757"/>
        <label>Q(A)</label>
    </ligand>
</feature>
<feature type="binding site" evidence="2">
    <location>
        <position position="269"/>
    </location>
    <ligand>
        <name>Fe cation</name>
        <dbReference type="ChEBI" id="CHEBI:24875"/>
        <note>ligand shared with heterodimeric partner</note>
    </ligand>
</feature>
<feature type="modified residue" description="N-acetylthreonine" evidence="1">
    <location>
        <position position="2"/>
    </location>
</feature>
<feature type="modified residue" description="Phosphothreonine" evidence="1">
    <location>
        <position position="2"/>
    </location>
</feature>
<dbReference type="EC" id="1.10.3.9" evidence="2"/>
<dbReference type="EMBL" id="AP009123">
    <property type="protein sequence ID" value="BAF41242.1"/>
    <property type="molecule type" value="Genomic_DNA"/>
</dbReference>
<dbReference type="RefSeq" id="YP_913182.1">
    <property type="nucleotide sequence ID" value="NC_008641.1"/>
</dbReference>
<dbReference type="SMR" id="A0ZZ30"/>
<dbReference type="GeneID" id="4575219"/>
<dbReference type="GO" id="GO:0009535">
    <property type="term" value="C:chloroplast thylakoid membrane"/>
    <property type="evidence" value="ECO:0007669"/>
    <property type="project" value="UniProtKB-SubCell"/>
</dbReference>
<dbReference type="GO" id="GO:0009523">
    <property type="term" value="C:photosystem II"/>
    <property type="evidence" value="ECO:0007669"/>
    <property type="project" value="UniProtKB-KW"/>
</dbReference>
<dbReference type="GO" id="GO:0016168">
    <property type="term" value="F:chlorophyll binding"/>
    <property type="evidence" value="ECO:0007669"/>
    <property type="project" value="UniProtKB-UniRule"/>
</dbReference>
<dbReference type="GO" id="GO:0045156">
    <property type="term" value="F:electron transporter, transferring electrons within the cyclic electron transport pathway of photosynthesis activity"/>
    <property type="evidence" value="ECO:0007669"/>
    <property type="project" value="InterPro"/>
</dbReference>
<dbReference type="GO" id="GO:0005506">
    <property type="term" value="F:iron ion binding"/>
    <property type="evidence" value="ECO:0007669"/>
    <property type="project" value="UniProtKB-UniRule"/>
</dbReference>
<dbReference type="GO" id="GO:0010242">
    <property type="term" value="F:oxygen evolving activity"/>
    <property type="evidence" value="ECO:0007669"/>
    <property type="project" value="UniProtKB-EC"/>
</dbReference>
<dbReference type="GO" id="GO:0009772">
    <property type="term" value="P:photosynthetic electron transport in photosystem II"/>
    <property type="evidence" value="ECO:0007669"/>
    <property type="project" value="InterPro"/>
</dbReference>
<dbReference type="CDD" id="cd09288">
    <property type="entry name" value="Photosystem-II_D2"/>
    <property type="match status" value="1"/>
</dbReference>
<dbReference type="FunFam" id="1.20.85.10:FF:000001">
    <property type="entry name" value="photosystem II D2 protein-like"/>
    <property type="match status" value="1"/>
</dbReference>
<dbReference type="Gene3D" id="1.20.85.10">
    <property type="entry name" value="Photosystem II protein D1-like"/>
    <property type="match status" value="1"/>
</dbReference>
<dbReference type="HAMAP" id="MF_01383">
    <property type="entry name" value="PSII_PsbD_D2"/>
    <property type="match status" value="1"/>
</dbReference>
<dbReference type="InterPro" id="IPR055266">
    <property type="entry name" value="D1/D2"/>
</dbReference>
<dbReference type="InterPro" id="IPR036854">
    <property type="entry name" value="Photo_II_D1/D2_sf"/>
</dbReference>
<dbReference type="InterPro" id="IPR000484">
    <property type="entry name" value="Photo_RC_L/M"/>
</dbReference>
<dbReference type="InterPro" id="IPR055265">
    <property type="entry name" value="Photo_RC_L/M_CS"/>
</dbReference>
<dbReference type="InterPro" id="IPR005868">
    <property type="entry name" value="PSII_PsbD/D2"/>
</dbReference>
<dbReference type="NCBIfam" id="TIGR01152">
    <property type="entry name" value="psbD"/>
    <property type="match status" value="1"/>
</dbReference>
<dbReference type="PANTHER" id="PTHR33149:SF12">
    <property type="entry name" value="PHOTOSYSTEM II D2 PROTEIN"/>
    <property type="match status" value="1"/>
</dbReference>
<dbReference type="PANTHER" id="PTHR33149">
    <property type="entry name" value="PHOTOSYSTEM II PROTEIN D1"/>
    <property type="match status" value="1"/>
</dbReference>
<dbReference type="Pfam" id="PF00124">
    <property type="entry name" value="Photo_RC"/>
    <property type="match status" value="1"/>
</dbReference>
<dbReference type="PRINTS" id="PR00256">
    <property type="entry name" value="REACTNCENTRE"/>
</dbReference>
<dbReference type="SUPFAM" id="SSF81483">
    <property type="entry name" value="Bacterial photosystem II reaction centre, L and M subunits"/>
    <property type="match status" value="1"/>
</dbReference>
<dbReference type="PROSITE" id="PS00244">
    <property type="entry name" value="REACTION_CENTER"/>
    <property type="match status" value="1"/>
</dbReference>
<protein>
    <recommendedName>
        <fullName evidence="2">Photosystem II D2 protein</fullName>
        <shortName evidence="2">PSII D2 protein</shortName>
        <ecNumber evidence="2">1.10.3.9</ecNumber>
    </recommendedName>
    <alternativeName>
        <fullName evidence="2">Photosystem Q(A) protein</fullName>
    </alternativeName>
</protein>